<name>PFF1_ASPOR</name>
<accession>Q2UU23</accession>
<dbReference type="EC" id="3.4.-.-" evidence="6"/>
<dbReference type="EMBL" id="BA000049">
    <property type="protein sequence ID" value="BAE54942.1"/>
    <property type="molecule type" value="Genomic_DNA"/>
</dbReference>
<dbReference type="RefSeq" id="XP_001816944.1">
    <property type="nucleotide sequence ID" value="XM_001816892.3"/>
</dbReference>
<dbReference type="SMR" id="Q2UU23"/>
<dbReference type="STRING" id="510516.Q2UU23"/>
<dbReference type="EnsemblFungi" id="BAE54942">
    <property type="protein sequence ID" value="BAE54942"/>
    <property type="gene ID" value="AO090009000488"/>
</dbReference>
<dbReference type="GeneID" id="5988874"/>
<dbReference type="KEGG" id="aor:AO090009000488"/>
<dbReference type="VEuPathDB" id="FungiDB:AO090009000488"/>
<dbReference type="HOGENOM" id="CLU_006412_1_0_1"/>
<dbReference type="OMA" id="TPWPVTI"/>
<dbReference type="OrthoDB" id="116291at5052"/>
<dbReference type="Proteomes" id="UP000006564">
    <property type="component" value="Chromosome 1"/>
</dbReference>
<dbReference type="GO" id="GO:0005774">
    <property type="term" value="C:vacuolar membrane"/>
    <property type="evidence" value="ECO:0007669"/>
    <property type="project" value="UniProtKB-SubCell"/>
</dbReference>
<dbReference type="GO" id="GO:0046872">
    <property type="term" value="F:metal ion binding"/>
    <property type="evidence" value="ECO:0007669"/>
    <property type="project" value="UniProtKB-KW"/>
</dbReference>
<dbReference type="GO" id="GO:0008235">
    <property type="term" value="F:metalloexopeptidase activity"/>
    <property type="evidence" value="ECO:0007669"/>
    <property type="project" value="InterPro"/>
</dbReference>
<dbReference type="GO" id="GO:0006508">
    <property type="term" value="P:proteolysis"/>
    <property type="evidence" value="ECO:0007669"/>
    <property type="project" value="UniProtKB-KW"/>
</dbReference>
<dbReference type="CDD" id="cd03875">
    <property type="entry name" value="M28_Fxna_like"/>
    <property type="match status" value="1"/>
</dbReference>
<dbReference type="FunFam" id="3.40.630.10:FF:000057">
    <property type="entry name" value="Vacuolar membrane protease"/>
    <property type="match status" value="1"/>
</dbReference>
<dbReference type="Gene3D" id="3.40.630.10">
    <property type="entry name" value="Zn peptidases"/>
    <property type="match status" value="1"/>
</dbReference>
<dbReference type="InterPro" id="IPR048024">
    <property type="entry name" value="Fxna-like_M28_dom"/>
</dbReference>
<dbReference type="InterPro" id="IPR045175">
    <property type="entry name" value="M28_fam"/>
</dbReference>
<dbReference type="InterPro" id="IPR007484">
    <property type="entry name" value="Peptidase_M28"/>
</dbReference>
<dbReference type="InterPro" id="IPR053975">
    <property type="entry name" value="PFF1_C"/>
</dbReference>
<dbReference type="InterPro" id="IPR053976">
    <property type="entry name" value="PFF1_TM"/>
</dbReference>
<dbReference type="PANTHER" id="PTHR12147">
    <property type="entry name" value="METALLOPEPTIDASE M28 FAMILY MEMBER"/>
    <property type="match status" value="1"/>
</dbReference>
<dbReference type="PANTHER" id="PTHR12147:SF58">
    <property type="entry name" value="VACUOLAR MEMBRANE PROTEASE"/>
    <property type="match status" value="1"/>
</dbReference>
<dbReference type="Pfam" id="PF04389">
    <property type="entry name" value="Peptidase_M28"/>
    <property type="match status" value="1"/>
</dbReference>
<dbReference type="Pfam" id="PF22250">
    <property type="entry name" value="PFF1_C"/>
    <property type="match status" value="1"/>
</dbReference>
<dbReference type="Pfam" id="PF22251">
    <property type="entry name" value="PFF1_TM"/>
    <property type="match status" value="1"/>
</dbReference>
<dbReference type="SUPFAM" id="SSF53187">
    <property type="entry name" value="Zn-dependent exopeptidases"/>
    <property type="match status" value="1"/>
</dbReference>
<reference key="1">
    <citation type="journal article" date="2005" name="Nature">
        <title>Genome sequencing and analysis of Aspergillus oryzae.</title>
        <authorList>
            <person name="Machida M."/>
            <person name="Asai K."/>
            <person name="Sano M."/>
            <person name="Tanaka T."/>
            <person name="Kumagai T."/>
            <person name="Terai G."/>
            <person name="Kusumoto K."/>
            <person name="Arima T."/>
            <person name="Akita O."/>
            <person name="Kashiwagi Y."/>
            <person name="Abe K."/>
            <person name="Gomi K."/>
            <person name="Horiuchi H."/>
            <person name="Kitamoto K."/>
            <person name="Kobayashi T."/>
            <person name="Takeuchi M."/>
            <person name="Denning D.W."/>
            <person name="Galagan J.E."/>
            <person name="Nierman W.C."/>
            <person name="Yu J."/>
            <person name="Archer D.B."/>
            <person name="Bennett J.W."/>
            <person name="Bhatnagar D."/>
            <person name="Cleveland T.E."/>
            <person name="Fedorova N.D."/>
            <person name="Gotoh O."/>
            <person name="Horikawa H."/>
            <person name="Hosoyama A."/>
            <person name="Ichinomiya M."/>
            <person name="Igarashi R."/>
            <person name="Iwashita K."/>
            <person name="Juvvadi P.R."/>
            <person name="Kato M."/>
            <person name="Kato Y."/>
            <person name="Kin T."/>
            <person name="Kokubun A."/>
            <person name="Maeda H."/>
            <person name="Maeyama N."/>
            <person name="Maruyama J."/>
            <person name="Nagasaki H."/>
            <person name="Nakajima T."/>
            <person name="Oda K."/>
            <person name="Okada K."/>
            <person name="Paulsen I."/>
            <person name="Sakamoto K."/>
            <person name="Sawano T."/>
            <person name="Takahashi M."/>
            <person name="Takase K."/>
            <person name="Terabayashi Y."/>
            <person name="Wortman J.R."/>
            <person name="Yamada O."/>
            <person name="Yamagata Y."/>
            <person name="Anazawa H."/>
            <person name="Hata Y."/>
            <person name="Koide Y."/>
            <person name="Komori T."/>
            <person name="Koyama Y."/>
            <person name="Minetoki T."/>
            <person name="Suharnan S."/>
            <person name="Tanaka A."/>
            <person name="Isono K."/>
            <person name="Kuhara S."/>
            <person name="Ogasawara N."/>
            <person name="Kikuchi H."/>
        </authorList>
    </citation>
    <scope>NUCLEOTIDE SEQUENCE [LARGE SCALE GENOMIC DNA]</scope>
    <source>
        <strain>ATCC 42149 / RIB 40</strain>
    </source>
</reference>
<organism>
    <name type="scientific">Aspergillus oryzae (strain ATCC 42149 / RIB 40)</name>
    <name type="common">Yellow koji mold</name>
    <dbReference type="NCBI Taxonomy" id="510516"/>
    <lineage>
        <taxon>Eukaryota</taxon>
        <taxon>Fungi</taxon>
        <taxon>Dikarya</taxon>
        <taxon>Ascomycota</taxon>
        <taxon>Pezizomycotina</taxon>
        <taxon>Eurotiomycetes</taxon>
        <taxon>Eurotiomycetidae</taxon>
        <taxon>Eurotiales</taxon>
        <taxon>Aspergillaceae</taxon>
        <taxon>Aspergillus</taxon>
        <taxon>Aspergillus subgen. Circumdati</taxon>
    </lineage>
</organism>
<keyword id="KW-0325">Glycoprotein</keyword>
<keyword id="KW-0378">Hydrolase</keyword>
<keyword id="KW-0472">Membrane</keyword>
<keyword id="KW-0479">Metal-binding</keyword>
<keyword id="KW-0482">Metalloprotease</keyword>
<keyword id="KW-0645">Protease</keyword>
<keyword id="KW-1185">Reference proteome</keyword>
<keyword id="KW-0812">Transmembrane</keyword>
<keyword id="KW-1133">Transmembrane helix</keyword>
<keyword id="KW-0926">Vacuole</keyword>
<keyword id="KW-0862">Zinc</keyword>
<gene>
    <name type="ORF">AO090009000488</name>
</gene>
<evidence type="ECO:0000250" key="1">
    <source>
        <dbReference type="UniProtKB" id="P38244"/>
    </source>
</evidence>
<evidence type="ECO:0000250" key="2">
    <source>
        <dbReference type="UniProtKB" id="P80561"/>
    </source>
</evidence>
<evidence type="ECO:0000255" key="3"/>
<evidence type="ECO:0000255" key="4">
    <source>
        <dbReference type="PROSITE-ProRule" id="PRU00498"/>
    </source>
</evidence>
<evidence type="ECO:0000256" key="5">
    <source>
        <dbReference type="SAM" id="MobiDB-lite"/>
    </source>
</evidence>
<evidence type="ECO:0000305" key="6"/>
<sequence length="955" mass="105601">MASLRLPRANPLAFTRWPVTVITAIVYLALLIPLLVVHHVVPSAPSSPPSGLNISEAWADLQVLTNGFHPYNSRRNDVIHSWLLRRINEILDSTPLEQEYRALDEEKPDVFVFDDVYSNLTTYGGTLKDADLGVYFEGTNVIVYIRGWEDDTEHWWEAPNGVPTSRGGVLVNSHYDSVSTGFGATDDGVGVVTCLQLVKYFTTPGHAPRRGLVVLFNNGEEDFLNGARVYSQHPISKLPHTFLNLEGAGAGGRATLFRSSDFEVTGPYMRSPHPFGSVLSANGFDTGLIASQTDYVIFQGNMGLRGLDVAFMEPRARYHTNQDDTRHTSKDSVWHMLSAAVATTEGLVSDSTDRFDGAPNTDGGVPSGSGSQAVWFDLFGSTFVLFQLHTLFALLVTLLIVGPLTLLFTSIALTKADKMYLFRSSAKSEDRLDVVPLQGLRGFFRFPFLFGIPTVVTVGLAYLVTKVNPYIIHSSAYAVWSMMVAAWVFLAWFVSRVADFARPSAFHRIYTLTWMYVLSWVSAVIATVYANQRGLAGGYFIFFFHAGIFLAKWISYLELFALPSKTEYANQLRSASGRASGHGSRRGTTSGEDDGEEAEEEPTESTSLLGSGQRTTFANYVRVGGDNHAVAEEEVIDPNVYGREQAWSYALPKWTWVLQLLLTAPITLIMVGPLALLTISAISQTGQDGGHPLFAYVAIAIFTTIMLTPLLPFIHRYTYHVPLFLLAVFLGTLIYNLVAFPFSDSNRLKLYYVQEVDLDTGVNSATFAGLSPFVKDVSQELPSAAGQTVSCEWHTKRRNLLSCSWEGIAPQPVEGDHPMKDWVSFNISKSTDKPQARFEVSGLNTRACRILFDTPVKNFHVAGSAYDPRFPYDAAGVNEIRLWSRTWENQWTVDVDWDEGALKGNVVCLWSDHNQPGVLPALDEAIQFLPVWAAVTKGSDGLVEGRRAFEIGNDD</sequence>
<protein>
    <recommendedName>
        <fullName evidence="1">Vacuolar membrane protease</fullName>
        <ecNumber evidence="6">3.4.-.-</ecNumber>
    </recommendedName>
    <alternativeName>
        <fullName evidence="1">FXNA-related family protease 1</fullName>
    </alternativeName>
</protein>
<proteinExistence type="inferred from homology"/>
<feature type="chain" id="PRO_0000411703" description="Vacuolar membrane protease">
    <location>
        <begin position="1"/>
        <end position="955"/>
    </location>
</feature>
<feature type="topological domain" description="Cytoplasmic" evidence="1">
    <location>
        <begin position="1"/>
        <end position="16"/>
    </location>
</feature>
<feature type="transmembrane region" description="Helical; Name=1" evidence="3">
    <location>
        <begin position="17"/>
        <end position="37"/>
    </location>
</feature>
<feature type="topological domain" description="Vacuolar" evidence="1">
    <location>
        <begin position="38"/>
        <end position="390"/>
    </location>
</feature>
<feature type="transmembrane region" description="Helical; Name=2" evidence="3">
    <location>
        <begin position="391"/>
        <end position="411"/>
    </location>
</feature>
<feature type="topological domain" description="Cytoplasmic" evidence="1">
    <location>
        <begin position="412"/>
        <end position="442"/>
    </location>
</feature>
<feature type="transmembrane region" description="Helical; Name=3" evidence="3">
    <location>
        <begin position="443"/>
        <end position="463"/>
    </location>
</feature>
<feature type="topological domain" description="Vacuolar" evidence="1">
    <location>
        <begin position="464"/>
        <end position="473"/>
    </location>
</feature>
<feature type="transmembrane region" description="Helical; Name=4" evidence="3">
    <location>
        <begin position="474"/>
        <end position="494"/>
    </location>
</feature>
<feature type="topological domain" description="Cytoplasmic" evidence="1">
    <location>
        <begin position="495"/>
        <end position="508"/>
    </location>
</feature>
<feature type="transmembrane region" description="Helical; Name=5" evidence="3">
    <location>
        <begin position="509"/>
        <end position="529"/>
    </location>
</feature>
<feature type="topological domain" description="Vacuolar" evidence="1">
    <location>
        <begin position="530"/>
        <end position="533"/>
    </location>
</feature>
<feature type="transmembrane region" description="Helical; Name=6" evidence="3">
    <location>
        <begin position="534"/>
        <end position="554"/>
    </location>
</feature>
<feature type="topological domain" description="Cytoplasmic" evidence="1">
    <location>
        <begin position="555"/>
        <end position="656"/>
    </location>
</feature>
<feature type="transmembrane region" description="Helical; Name=7" evidence="3">
    <location>
        <begin position="657"/>
        <end position="677"/>
    </location>
</feature>
<feature type="topological domain" description="Vacuolar" evidence="1">
    <location>
        <begin position="678"/>
        <end position="693"/>
    </location>
</feature>
<feature type="transmembrane region" description="Helical; Name=8" evidence="3">
    <location>
        <begin position="694"/>
        <end position="714"/>
    </location>
</feature>
<feature type="topological domain" description="Cytoplasmic" evidence="1">
    <location>
        <begin position="715"/>
        <end position="721"/>
    </location>
</feature>
<feature type="transmembrane region" description="Helical; Name=9" evidence="3">
    <location>
        <begin position="722"/>
        <end position="742"/>
    </location>
</feature>
<feature type="topological domain" description="Vacuolar" evidence="1">
    <location>
        <begin position="743"/>
        <end position="955"/>
    </location>
</feature>
<feature type="region of interest" description="Disordered" evidence="5">
    <location>
        <begin position="574"/>
        <end position="611"/>
    </location>
</feature>
<feature type="compositionally biased region" description="Low complexity" evidence="5">
    <location>
        <begin position="574"/>
        <end position="590"/>
    </location>
</feature>
<feature type="compositionally biased region" description="Acidic residues" evidence="5">
    <location>
        <begin position="591"/>
        <end position="603"/>
    </location>
</feature>
<feature type="active site" description="Proton acceptor" evidence="2">
    <location>
        <position position="220"/>
    </location>
</feature>
<feature type="binding site" evidence="2">
    <location>
        <position position="174"/>
    </location>
    <ligand>
        <name>Zn(2+)</name>
        <dbReference type="ChEBI" id="CHEBI:29105"/>
        <label>1</label>
        <note>catalytic</note>
    </ligand>
</feature>
<feature type="binding site" evidence="2">
    <location>
        <position position="186"/>
    </location>
    <ligand>
        <name>Zn(2+)</name>
        <dbReference type="ChEBI" id="CHEBI:29105"/>
        <label>1</label>
        <note>catalytic</note>
    </ligand>
</feature>
<feature type="binding site" evidence="2">
    <location>
        <position position="186"/>
    </location>
    <ligand>
        <name>Zn(2+)</name>
        <dbReference type="ChEBI" id="CHEBI:29105"/>
        <label>2</label>
        <note>catalytic</note>
    </ligand>
</feature>
<feature type="binding site" evidence="2">
    <location>
        <position position="221"/>
    </location>
    <ligand>
        <name>Zn(2+)</name>
        <dbReference type="ChEBI" id="CHEBI:29105"/>
        <label>2</label>
        <note>catalytic</note>
    </ligand>
</feature>
<feature type="binding site" evidence="2">
    <location>
        <position position="246"/>
    </location>
    <ligand>
        <name>Zn(2+)</name>
        <dbReference type="ChEBI" id="CHEBI:29105"/>
        <label>1</label>
        <note>catalytic</note>
    </ligand>
</feature>
<feature type="binding site" evidence="2">
    <location>
        <position position="319"/>
    </location>
    <ligand>
        <name>Zn(2+)</name>
        <dbReference type="ChEBI" id="CHEBI:29105"/>
        <label>2</label>
        <note>catalytic</note>
    </ligand>
</feature>
<feature type="site" description="Transition state stabilizer" evidence="2">
    <location>
        <position position="318"/>
    </location>
</feature>
<feature type="glycosylation site" description="N-linked (GlcNAc...) asparagine" evidence="4">
    <location>
        <position position="53"/>
    </location>
</feature>
<feature type="glycosylation site" description="N-linked (GlcNAc...) asparagine" evidence="4">
    <location>
        <position position="119"/>
    </location>
</feature>
<feature type="glycosylation site" description="N-linked (GlcNAc...) asparagine" evidence="4">
    <location>
        <position position="826"/>
    </location>
</feature>
<comment type="function">
    <text evidence="1">May be involved in vacuolar sorting and osmoregulation.</text>
</comment>
<comment type="cofactor">
    <cofactor evidence="2">
        <name>Zn(2+)</name>
        <dbReference type="ChEBI" id="CHEBI:29105"/>
    </cofactor>
    <text evidence="2">Binds 2 Zn(2+) ions per subunit.</text>
</comment>
<comment type="subcellular location">
    <subcellularLocation>
        <location evidence="1">Vacuole membrane</location>
        <topology evidence="3">Multi-pass membrane protein</topology>
    </subcellularLocation>
</comment>
<comment type="similarity">
    <text evidence="6">Belongs to the peptidase M28 family.</text>
</comment>